<reference key="1">
    <citation type="journal article" date="2005" name="Nucleic Acids Res.">
        <title>Genome dynamics and diversity of Shigella species, the etiologic agents of bacillary dysentery.</title>
        <authorList>
            <person name="Yang F."/>
            <person name="Yang J."/>
            <person name="Zhang X."/>
            <person name="Chen L."/>
            <person name="Jiang Y."/>
            <person name="Yan Y."/>
            <person name="Tang X."/>
            <person name="Wang J."/>
            <person name="Xiong Z."/>
            <person name="Dong J."/>
            <person name="Xue Y."/>
            <person name="Zhu Y."/>
            <person name="Xu X."/>
            <person name="Sun L."/>
            <person name="Chen S."/>
            <person name="Nie H."/>
            <person name="Peng J."/>
            <person name="Xu J."/>
            <person name="Wang Y."/>
            <person name="Yuan Z."/>
            <person name="Wen Y."/>
            <person name="Yao Z."/>
            <person name="Shen Y."/>
            <person name="Qiang B."/>
            <person name="Hou Y."/>
            <person name="Yu J."/>
            <person name="Jin Q."/>
        </authorList>
    </citation>
    <scope>NUCLEOTIDE SEQUENCE [LARGE SCALE GENOMIC DNA]</scope>
    <source>
        <strain>Ss046</strain>
    </source>
</reference>
<sequence>MAGLKLQAVTKSWDGKTQVIKPLTLDVADGEFIVMVGPSGCGKSTLLRMVAGLERVTEGDIWINDQRVTEMEPKDRGIAMVFQNYALYPHMSVEENMAWGLKIRGMGKQQIAERVKEAARILELDGLLKRRPRELSGGQRQRVAMGRAIVRDPAVFLFDEPLSNLDAKLRVQMRLELQQLHRRLKTTSLYVTHDQVEAMTLAQRVMVMNGGVAEQIGTPVEVYEKPASLFVASFIGSPAMNLLTGRVNNEGTHFELDGGIVLPLNGGYRQYAGRKMTLGIRPEHIALSSQAEGGVPLVMDTLEILGADNLAHGRWGEQKLVVRLAHQERPTAGSTLWLHLAENQLHLFDGETGQRV</sequence>
<name>UGPC_SHISS</name>
<feature type="chain" id="PRO_0000289783" description="sn-glycerol-3-phosphate import ATP-binding protein UgpC">
    <location>
        <begin position="1"/>
        <end position="356"/>
    </location>
</feature>
<feature type="domain" description="ABC transporter" evidence="1">
    <location>
        <begin position="4"/>
        <end position="235"/>
    </location>
</feature>
<feature type="binding site" evidence="1">
    <location>
        <begin position="37"/>
        <end position="44"/>
    </location>
    <ligand>
        <name>ATP</name>
        <dbReference type="ChEBI" id="CHEBI:30616"/>
    </ligand>
</feature>
<dbReference type="EC" id="7.6.2.10" evidence="1"/>
<dbReference type="EMBL" id="CP000038">
    <property type="protein sequence ID" value="AAZ90235.1"/>
    <property type="status" value="ALT_INIT"/>
    <property type="molecule type" value="Genomic_DNA"/>
</dbReference>
<dbReference type="RefSeq" id="WP_000907798.1">
    <property type="nucleotide sequence ID" value="NC_007384.1"/>
</dbReference>
<dbReference type="SMR" id="Q3YW77"/>
<dbReference type="GeneID" id="93778541"/>
<dbReference type="KEGG" id="ssn:SSON_3688"/>
<dbReference type="HOGENOM" id="CLU_000604_1_1_6"/>
<dbReference type="Proteomes" id="UP000002529">
    <property type="component" value="Chromosome"/>
</dbReference>
<dbReference type="GO" id="GO:0055052">
    <property type="term" value="C:ATP-binding cassette (ABC) transporter complex, substrate-binding subunit-containing"/>
    <property type="evidence" value="ECO:0007669"/>
    <property type="project" value="TreeGrafter"/>
</dbReference>
<dbReference type="GO" id="GO:0015430">
    <property type="term" value="F:ABC-type glycerol-3-phosphate transporter activity"/>
    <property type="evidence" value="ECO:0007669"/>
    <property type="project" value="UniProtKB-EC"/>
</dbReference>
<dbReference type="GO" id="GO:0005524">
    <property type="term" value="F:ATP binding"/>
    <property type="evidence" value="ECO:0007669"/>
    <property type="project" value="UniProtKB-KW"/>
</dbReference>
<dbReference type="GO" id="GO:0016887">
    <property type="term" value="F:ATP hydrolysis activity"/>
    <property type="evidence" value="ECO:0007669"/>
    <property type="project" value="InterPro"/>
</dbReference>
<dbReference type="GO" id="GO:0008643">
    <property type="term" value="P:carbohydrate transport"/>
    <property type="evidence" value="ECO:0007669"/>
    <property type="project" value="InterPro"/>
</dbReference>
<dbReference type="GO" id="GO:0001407">
    <property type="term" value="P:glycerophosphodiester transmembrane transport"/>
    <property type="evidence" value="ECO:0007669"/>
    <property type="project" value="TreeGrafter"/>
</dbReference>
<dbReference type="CDD" id="cd03301">
    <property type="entry name" value="ABC_MalK_N"/>
    <property type="match status" value="1"/>
</dbReference>
<dbReference type="FunFam" id="3.40.50.300:FF:000042">
    <property type="entry name" value="Maltose/maltodextrin ABC transporter, ATP-binding protein"/>
    <property type="match status" value="1"/>
</dbReference>
<dbReference type="FunFam" id="2.40.50.100:FF:000032">
    <property type="entry name" value="sn-glycerol-3-phosphate import ATP-binding protein UgpC"/>
    <property type="match status" value="1"/>
</dbReference>
<dbReference type="FunFam" id="2.40.50.140:FF:000142">
    <property type="entry name" value="sn-glycerol-3-phosphate import ATP-binding protein UgpC"/>
    <property type="match status" value="1"/>
</dbReference>
<dbReference type="Gene3D" id="2.40.50.100">
    <property type="match status" value="1"/>
</dbReference>
<dbReference type="Gene3D" id="2.40.50.140">
    <property type="entry name" value="Nucleic acid-binding proteins"/>
    <property type="match status" value="1"/>
</dbReference>
<dbReference type="Gene3D" id="3.40.50.300">
    <property type="entry name" value="P-loop containing nucleotide triphosphate hydrolases"/>
    <property type="match status" value="1"/>
</dbReference>
<dbReference type="InterPro" id="IPR003593">
    <property type="entry name" value="AAA+_ATPase"/>
</dbReference>
<dbReference type="InterPro" id="IPR003439">
    <property type="entry name" value="ABC_transporter-like_ATP-bd"/>
</dbReference>
<dbReference type="InterPro" id="IPR017871">
    <property type="entry name" value="ABC_transporter-like_CS"/>
</dbReference>
<dbReference type="InterPro" id="IPR015855">
    <property type="entry name" value="ABC_transpr_MalK-like"/>
</dbReference>
<dbReference type="InterPro" id="IPR047641">
    <property type="entry name" value="ABC_transpr_MalK/UgpC-like"/>
</dbReference>
<dbReference type="InterPro" id="IPR008995">
    <property type="entry name" value="Mo/tungstate-bd_C_term_dom"/>
</dbReference>
<dbReference type="InterPro" id="IPR012340">
    <property type="entry name" value="NA-bd_OB-fold"/>
</dbReference>
<dbReference type="InterPro" id="IPR040582">
    <property type="entry name" value="OB_MalK-like"/>
</dbReference>
<dbReference type="InterPro" id="IPR027417">
    <property type="entry name" value="P-loop_NTPase"/>
</dbReference>
<dbReference type="NCBIfam" id="NF008653">
    <property type="entry name" value="PRK11650.1"/>
    <property type="match status" value="1"/>
</dbReference>
<dbReference type="PANTHER" id="PTHR43875">
    <property type="entry name" value="MALTODEXTRIN IMPORT ATP-BINDING PROTEIN MSMX"/>
    <property type="match status" value="1"/>
</dbReference>
<dbReference type="PANTHER" id="PTHR43875:SF12">
    <property type="entry name" value="SN-GLYCEROL-3-PHOSPHATE IMPORT ATP-BINDING PROTEIN UGPC"/>
    <property type="match status" value="1"/>
</dbReference>
<dbReference type="Pfam" id="PF00005">
    <property type="entry name" value="ABC_tran"/>
    <property type="match status" value="1"/>
</dbReference>
<dbReference type="Pfam" id="PF17912">
    <property type="entry name" value="OB_MalK"/>
    <property type="match status" value="1"/>
</dbReference>
<dbReference type="SMART" id="SM00382">
    <property type="entry name" value="AAA"/>
    <property type="match status" value="1"/>
</dbReference>
<dbReference type="SUPFAM" id="SSF50331">
    <property type="entry name" value="MOP-like"/>
    <property type="match status" value="1"/>
</dbReference>
<dbReference type="SUPFAM" id="SSF52540">
    <property type="entry name" value="P-loop containing nucleoside triphosphate hydrolases"/>
    <property type="match status" value="1"/>
</dbReference>
<dbReference type="PROSITE" id="PS00211">
    <property type="entry name" value="ABC_TRANSPORTER_1"/>
    <property type="match status" value="1"/>
</dbReference>
<dbReference type="PROSITE" id="PS50893">
    <property type="entry name" value="ABC_TRANSPORTER_2"/>
    <property type="match status" value="1"/>
</dbReference>
<dbReference type="PROSITE" id="PS51315">
    <property type="entry name" value="UGPC"/>
    <property type="match status" value="1"/>
</dbReference>
<accession>Q3YW77</accession>
<organism>
    <name type="scientific">Shigella sonnei (strain Ss046)</name>
    <dbReference type="NCBI Taxonomy" id="300269"/>
    <lineage>
        <taxon>Bacteria</taxon>
        <taxon>Pseudomonadati</taxon>
        <taxon>Pseudomonadota</taxon>
        <taxon>Gammaproteobacteria</taxon>
        <taxon>Enterobacterales</taxon>
        <taxon>Enterobacteriaceae</taxon>
        <taxon>Shigella</taxon>
    </lineage>
</organism>
<comment type="function">
    <text evidence="1">Part of the ABC transporter complex UgpBAEC involved in sn-glycerol-3-phosphate (G3P) import. Responsible for energy coupling to the transport system.</text>
</comment>
<comment type="catalytic activity">
    <reaction evidence="1">
        <text>sn-glycerol 3-phosphate(out) + ATP + H2O = sn-glycerol 3-phosphate(in) + ADP + phosphate + H(+)</text>
        <dbReference type="Rhea" id="RHEA:21668"/>
        <dbReference type="ChEBI" id="CHEBI:15377"/>
        <dbReference type="ChEBI" id="CHEBI:15378"/>
        <dbReference type="ChEBI" id="CHEBI:30616"/>
        <dbReference type="ChEBI" id="CHEBI:43474"/>
        <dbReference type="ChEBI" id="CHEBI:57597"/>
        <dbReference type="ChEBI" id="CHEBI:456216"/>
        <dbReference type="EC" id="7.6.2.10"/>
    </reaction>
</comment>
<comment type="subunit">
    <text evidence="1">The complex is composed of two ATP-binding proteins (UgpC), two transmembrane proteins (UgpA and UgpE) and a solute-binding protein (UgpB).</text>
</comment>
<comment type="subcellular location">
    <subcellularLocation>
        <location evidence="1">Cell inner membrane</location>
        <topology evidence="1">Peripheral membrane protein</topology>
    </subcellularLocation>
</comment>
<comment type="similarity">
    <text evidence="1">Belongs to the ABC transporter superfamily. sn-glycerol-3-phosphate importer (TC 3.A.1.1.3) family.</text>
</comment>
<comment type="sequence caution" evidence="2">
    <conflict type="erroneous initiation">
        <sequence resource="EMBL-CDS" id="AAZ90235"/>
    </conflict>
</comment>
<evidence type="ECO:0000255" key="1">
    <source>
        <dbReference type="HAMAP-Rule" id="MF_01727"/>
    </source>
</evidence>
<evidence type="ECO:0000305" key="2"/>
<protein>
    <recommendedName>
        <fullName evidence="1">sn-glycerol-3-phosphate import ATP-binding protein UgpC</fullName>
        <ecNumber evidence="1">7.6.2.10</ecNumber>
    </recommendedName>
</protein>
<proteinExistence type="inferred from homology"/>
<gene>
    <name evidence="1" type="primary">ugpC</name>
    <name type="ordered locus">SSON_3688</name>
</gene>
<keyword id="KW-0067">ATP-binding</keyword>
<keyword id="KW-0997">Cell inner membrane</keyword>
<keyword id="KW-1003">Cell membrane</keyword>
<keyword id="KW-0472">Membrane</keyword>
<keyword id="KW-0547">Nucleotide-binding</keyword>
<keyword id="KW-1185">Reference proteome</keyword>
<keyword id="KW-0762">Sugar transport</keyword>
<keyword id="KW-1278">Translocase</keyword>
<keyword id="KW-0813">Transport</keyword>